<keyword id="KW-0238">DNA-binding</keyword>
<keyword id="KW-1185">Reference proteome</keyword>
<keyword id="KW-0804">Transcription</keyword>
<keyword id="KW-0805">Transcription regulation</keyword>
<organism>
    <name type="scientific">Bacillus subtilis (strain 168)</name>
    <dbReference type="NCBI Taxonomy" id="224308"/>
    <lineage>
        <taxon>Bacteria</taxon>
        <taxon>Bacillati</taxon>
        <taxon>Bacillota</taxon>
        <taxon>Bacilli</taxon>
        <taxon>Bacillales</taxon>
        <taxon>Bacillaceae</taxon>
        <taxon>Bacillus</taxon>
    </lineage>
</organism>
<comment type="similarity">
    <text evidence="2">Belongs to the LysR transcriptional regulatory family.</text>
</comment>
<comment type="sequence caution" evidence="2">
    <conflict type="erroneous termination">
        <sequence resource="EMBL-CDS" id="BAA05198"/>
    </conflict>
    <text>Truncated C-terminus.</text>
</comment>
<accession>P37499</accession>
<protein>
    <recommendedName>
        <fullName>Uncharacterized HTH-type transcriptional regulator YybE</fullName>
    </recommendedName>
</protein>
<reference key="1">
    <citation type="journal article" date="1994" name="DNA Res.">
        <title>Systematic sequencing of the 180 kilobase region of the Bacillus subtilis chromosome containing the replication origin.</title>
        <authorList>
            <person name="Ogasawara N."/>
            <person name="Nakai S."/>
            <person name="Yoshikawa H."/>
        </authorList>
    </citation>
    <scope>NUCLEOTIDE SEQUENCE [GENOMIC DNA]</scope>
    <source>
        <strain>168</strain>
    </source>
</reference>
<reference key="2">
    <citation type="journal article" date="1997" name="Nature">
        <title>The complete genome sequence of the Gram-positive bacterium Bacillus subtilis.</title>
        <authorList>
            <person name="Kunst F."/>
            <person name="Ogasawara N."/>
            <person name="Moszer I."/>
            <person name="Albertini A.M."/>
            <person name="Alloni G."/>
            <person name="Azevedo V."/>
            <person name="Bertero M.G."/>
            <person name="Bessieres P."/>
            <person name="Bolotin A."/>
            <person name="Borchert S."/>
            <person name="Borriss R."/>
            <person name="Boursier L."/>
            <person name="Brans A."/>
            <person name="Braun M."/>
            <person name="Brignell S.C."/>
            <person name="Bron S."/>
            <person name="Brouillet S."/>
            <person name="Bruschi C.V."/>
            <person name="Caldwell B."/>
            <person name="Capuano V."/>
            <person name="Carter N.M."/>
            <person name="Choi S.-K."/>
            <person name="Codani J.-J."/>
            <person name="Connerton I.F."/>
            <person name="Cummings N.J."/>
            <person name="Daniel R.A."/>
            <person name="Denizot F."/>
            <person name="Devine K.M."/>
            <person name="Duesterhoeft A."/>
            <person name="Ehrlich S.D."/>
            <person name="Emmerson P.T."/>
            <person name="Entian K.-D."/>
            <person name="Errington J."/>
            <person name="Fabret C."/>
            <person name="Ferrari E."/>
            <person name="Foulger D."/>
            <person name="Fritz C."/>
            <person name="Fujita M."/>
            <person name="Fujita Y."/>
            <person name="Fuma S."/>
            <person name="Galizzi A."/>
            <person name="Galleron N."/>
            <person name="Ghim S.-Y."/>
            <person name="Glaser P."/>
            <person name="Goffeau A."/>
            <person name="Golightly E.J."/>
            <person name="Grandi G."/>
            <person name="Guiseppi G."/>
            <person name="Guy B.J."/>
            <person name="Haga K."/>
            <person name="Haiech J."/>
            <person name="Harwood C.R."/>
            <person name="Henaut A."/>
            <person name="Hilbert H."/>
            <person name="Holsappel S."/>
            <person name="Hosono S."/>
            <person name="Hullo M.-F."/>
            <person name="Itaya M."/>
            <person name="Jones L.-M."/>
            <person name="Joris B."/>
            <person name="Karamata D."/>
            <person name="Kasahara Y."/>
            <person name="Klaerr-Blanchard M."/>
            <person name="Klein C."/>
            <person name="Kobayashi Y."/>
            <person name="Koetter P."/>
            <person name="Koningstein G."/>
            <person name="Krogh S."/>
            <person name="Kumano M."/>
            <person name="Kurita K."/>
            <person name="Lapidus A."/>
            <person name="Lardinois S."/>
            <person name="Lauber J."/>
            <person name="Lazarevic V."/>
            <person name="Lee S.-M."/>
            <person name="Levine A."/>
            <person name="Liu H."/>
            <person name="Masuda S."/>
            <person name="Mauel C."/>
            <person name="Medigue C."/>
            <person name="Medina N."/>
            <person name="Mellado R.P."/>
            <person name="Mizuno M."/>
            <person name="Moestl D."/>
            <person name="Nakai S."/>
            <person name="Noback M."/>
            <person name="Noone D."/>
            <person name="O'Reilly M."/>
            <person name="Ogawa K."/>
            <person name="Ogiwara A."/>
            <person name="Oudega B."/>
            <person name="Park S.-H."/>
            <person name="Parro V."/>
            <person name="Pohl T.M."/>
            <person name="Portetelle D."/>
            <person name="Porwollik S."/>
            <person name="Prescott A.M."/>
            <person name="Presecan E."/>
            <person name="Pujic P."/>
            <person name="Purnelle B."/>
            <person name="Rapoport G."/>
            <person name="Rey M."/>
            <person name="Reynolds S."/>
            <person name="Rieger M."/>
            <person name="Rivolta C."/>
            <person name="Rocha E."/>
            <person name="Roche B."/>
            <person name="Rose M."/>
            <person name="Sadaie Y."/>
            <person name="Sato T."/>
            <person name="Scanlan E."/>
            <person name="Schleich S."/>
            <person name="Schroeter R."/>
            <person name="Scoffone F."/>
            <person name="Sekiguchi J."/>
            <person name="Sekowska A."/>
            <person name="Seror S.J."/>
            <person name="Serror P."/>
            <person name="Shin B.-S."/>
            <person name="Soldo B."/>
            <person name="Sorokin A."/>
            <person name="Tacconi E."/>
            <person name="Takagi T."/>
            <person name="Takahashi H."/>
            <person name="Takemaru K."/>
            <person name="Takeuchi M."/>
            <person name="Tamakoshi A."/>
            <person name="Tanaka T."/>
            <person name="Terpstra P."/>
            <person name="Tognoni A."/>
            <person name="Tosato V."/>
            <person name="Uchiyama S."/>
            <person name="Vandenbol M."/>
            <person name="Vannier F."/>
            <person name="Vassarotti A."/>
            <person name="Viari A."/>
            <person name="Wambutt R."/>
            <person name="Wedler E."/>
            <person name="Wedler H."/>
            <person name="Weitzenegger T."/>
            <person name="Winters P."/>
            <person name="Wipat A."/>
            <person name="Yamamoto H."/>
            <person name="Yamane K."/>
            <person name="Yasumoto K."/>
            <person name="Yata K."/>
            <person name="Yoshida K."/>
            <person name="Yoshikawa H.-F."/>
            <person name="Zumstein E."/>
            <person name="Yoshikawa H."/>
            <person name="Danchin A."/>
        </authorList>
    </citation>
    <scope>NUCLEOTIDE SEQUENCE [LARGE SCALE GENOMIC DNA]</scope>
    <source>
        <strain>168</strain>
    </source>
</reference>
<reference key="3">
    <citation type="journal article" date="2009" name="Microbiology">
        <title>From a consortium sequence to a unified sequence: the Bacillus subtilis 168 reference genome a decade later.</title>
        <authorList>
            <person name="Barbe V."/>
            <person name="Cruveiller S."/>
            <person name="Kunst F."/>
            <person name="Lenoble P."/>
            <person name="Meurice G."/>
            <person name="Sekowska A."/>
            <person name="Vallenet D."/>
            <person name="Wang T."/>
            <person name="Moszer I."/>
            <person name="Medigue C."/>
            <person name="Danchin A."/>
        </authorList>
    </citation>
    <scope>SEQUENCE REVISION TO 10</scope>
</reference>
<dbReference type="EMBL" id="D26185">
    <property type="protein sequence ID" value="BAA05198.1"/>
    <property type="status" value="ALT_SEQ"/>
    <property type="molecule type" value="Genomic_DNA"/>
</dbReference>
<dbReference type="EMBL" id="AL009126">
    <property type="protein sequence ID" value="CAB16104.2"/>
    <property type="molecule type" value="Genomic_DNA"/>
</dbReference>
<dbReference type="PIR" id="S65992">
    <property type="entry name" value="S65992"/>
</dbReference>
<dbReference type="RefSeq" id="NP_391947.2">
    <property type="nucleotide sequence ID" value="NC_000964.3"/>
</dbReference>
<dbReference type="RefSeq" id="WP_003242958.1">
    <property type="nucleotide sequence ID" value="NZ_OZ025638.1"/>
</dbReference>
<dbReference type="SMR" id="P37499"/>
<dbReference type="FunCoup" id="P37499">
    <property type="interactions" value="308"/>
</dbReference>
<dbReference type="STRING" id="224308.BSU40670"/>
<dbReference type="PaxDb" id="224308-BSU40670"/>
<dbReference type="EnsemblBacteria" id="CAB16104">
    <property type="protein sequence ID" value="CAB16104"/>
    <property type="gene ID" value="BSU_40670"/>
</dbReference>
<dbReference type="GeneID" id="937875"/>
<dbReference type="KEGG" id="bsu:BSU40670"/>
<dbReference type="PATRIC" id="fig|224308.179.peg.4409"/>
<dbReference type="eggNOG" id="COG0583">
    <property type="taxonomic scope" value="Bacteria"/>
</dbReference>
<dbReference type="InParanoid" id="P37499"/>
<dbReference type="OrthoDB" id="9803735at2"/>
<dbReference type="PhylomeDB" id="P37499"/>
<dbReference type="BioCyc" id="BSUB:BSU40670-MONOMER"/>
<dbReference type="Proteomes" id="UP000001570">
    <property type="component" value="Chromosome"/>
</dbReference>
<dbReference type="GO" id="GO:0005829">
    <property type="term" value="C:cytosol"/>
    <property type="evidence" value="ECO:0000318"/>
    <property type="project" value="GO_Central"/>
</dbReference>
<dbReference type="GO" id="GO:0003700">
    <property type="term" value="F:DNA-binding transcription factor activity"/>
    <property type="evidence" value="ECO:0007669"/>
    <property type="project" value="InterPro"/>
</dbReference>
<dbReference type="GO" id="GO:0043565">
    <property type="term" value="F:sequence-specific DNA binding"/>
    <property type="evidence" value="ECO:0000318"/>
    <property type="project" value="GO_Central"/>
</dbReference>
<dbReference type="GO" id="GO:0006355">
    <property type="term" value="P:regulation of DNA-templated transcription"/>
    <property type="evidence" value="ECO:0000318"/>
    <property type="project" value="GO_Central"/>
</dbReference>
<dbReference type="CDD" id="cd08434">
    <property type="entry name" value="PBP2_GltC_like"/>
    <property type="match status" value="1"/>
</dbReference>
<dbReference type="FunFam" id="1.10.10.10:FF:000001">
    <property type="entry name" value="LysR family transcriptional regulator"/>
    <property type="match status" value="1"/>
</dbReference>
<dbReference type="Gene3D" id="3.40.190.290">
    <property type="match status" value="1"/>
</dbReference>
<dbReference type="Gene3D" id="1.10.10.10">
    <property type="entry name" value="Winged helix-like DNA-binding domain superfamily/Winged helix DNA-binding domain"/>
    <property type="match status" value="1"/>
</dbReference>
<dbReference type="InterPro" id="IPR050950">
    <property type="entry name" value="HTH-type_LysR_regulators"/>
</dbReference>
<dbReference type="InterPro" id="IPR005119">
    <property type="entry name" value="LysR_subst-bd"/>
</dbReference>
<dbReference type="InterPro" id="IPR000847">
    <property type="entry name" value="Tscrpt_reg_HTH_LysR"/>
</dbReference>
<dbReference type="InterPro" id="IPR036388">
    <property type="entry name" value="WH-like_DNA-bd_sf"/>
</dbReference>
<dbReference type="InterPro" id="IPR036390">
    <property type="entry name" value="WH_DNA-bd_sf"/>
</dbReference>
<dbReference type="PANTHER" id="PTHR30419:SF28">
    <property type="entry name" value="HTH-TYPE TRANSCRIPTIONAL REGULATOR BSDA"/>
    <property type="match status" value="1"/>
</dbReference>
<dbReference type="PANTHER" id="PTHR30419">
    <property type="entry name" value="HTH-TYPE TRANSCRIPTIONAL REGULATOR YBHD"/>
    <property type="match status" value="1"/>
</dbReference>
<dbReference type="Pfam" id="PF00126">
    <property type="entry name" value="HTH_1"/>
    <property type="match status" value="1"/>
</dbReference>
<dbReference type="Pfam" id="PF03466">
    <property type="entry name" value="LysR_substrate"/>
    <property type="match status" value="1"/>
</dbReference>
<dbReference type="PRINTS" id="PR00039">
    <property type="entry name" value="HTHLYSR"/>
</dbReference>
<dbReference type="SUPFAM" id="SSF53850">
    <property type="entry name" value="Periplasmic binding protein-like II"/>
    <property type="match status" value="1"/>
</dbReference>
<dbReference type="SUPFAM" id="SSF46785">
    <property type="entry name" value="Winged helix' DNA-binding domain"/>
    <property type="match status" value="1"/>
</dbReference>
<dbReference type="PROSITE" id="PS50931">
    <property type="entry name" value="HTH_LYSR"/>
    <property type="match status" value="1"/>
</dbReference>
<sequence>MEWEQLEYFQTLARMQHVTKAAKSLSITQPALSRSIARLENHLGVPLFDRQGRSISLNQYGHIFLRRVQAMMKEYTEGKEEIQALLKPDQGVVSLGFLHTLGTTLVPDLIGSFQQEYPNISFQLKQNHSYWLLERLKSGDLDLCLLASIKPENPIQWIKLWSEELFVFVPNDHPLASRESITLNEIAGERFILLKKGYALRMTVDELFEKANIQPNIMFEGEEATTAAGFVAAGLGISILPDLKGLDQSKITKIRVSWPECQRVIGIAWIKGRFLSPVAETFKQYVISHFSE</sequence>
<gene>
    <name type="primary">yybE</name>
    <name type="ordered locus">BSU40670</name>
</gene>
<feature type="chain" id="PRO_0000105826" description="Uncharacterized HTH-type transcriptional regulator YybE">
    <location>
        <begin position="1"/>
        <end position="292"/>
    </location>
</feature>
<feature type="domain" description="HTH lysR-type" evidence="1">
    <location>
        <begin position="1"/>
        <end position="58"/>
    </location>
</feature>
<feature type="DNA-binding region" description="H-T-H motif" evidence="1">
    <location>
        <begin position="18"/>
        <end position="37"/>
    </location>
</feature>
<proteinExistence type="inferred from homology"/>
<name>YYBE_BACSU</name>
<evidence type="ECO:0000255" key="1">
    <source>
        <dbReference type="PROSITE-ProRule" id="PRU00253"/>
    </source>
</evidence>
<evidence type="ECO:0000305" key="2"/>